<comment type="function">
    <text evidence="3">Rhomboid protease-like protein which has no protease activity but regulates the secretion of several ligands of the epidermal growth factor receptor. Indirectly activates the epidermal growth factor receptor signaling pathway and may thereby regulate sleep, cell survival, proliferation and migration.</text>
</comment>
<comment type="subcellular location">
    <subcellularLocation>
        <location evidence="3">Endoplasmic reticulum membrane</location>
        <topology evidence="3">Multi-pass membrane protein</topology>
    </subcellularLocation>
</comment>
<comment type="tissue specificity">
    <text evidence="3">Specifically expressed in the nervous system and in brain.</text>
</comment>
<comment type="developmental stage">
    <text evidence="3">Expressed exclusively in the central nervous system of embryos. In the third instar larva, expression is also restricted to neural tissue with specific expression behind the morphogenetic furrow in the developing eye and in the optic lobes within brain.</text>
</comment>
<comment type="disruption phenotype">
    <text evidence="3">Flies display a severe decrease in daytime activity pattern and an increase in sleeping periods.</text>
</comment>
<comment type="similarity">
    <text evidence="4">Belongs to the peptidase S54 family.</text>
</comment>
<sequence>MSSNGSDLGHNNRRNEKGNPDSVHSSMRGSMSSTRRKSINFQNQLQLALESNECDVMYCSLSSGRFRAPNGENFPPHGGKLKLSPLEKYDDANRGVPPPSPAPNSDCFATCVANQLPSQSCSVGSAKPETSVMQKHGMAGNGMVGSGMSGNGMAANGTNYHQRGVSPNSRYRLERYRESQSTPQSKLMDNMGGMPSAVPSVSATRLLLPSNVPLPLAQCENYNAYLGSTVHTPVKRYVPTPPPAMELYSDLSISSSPAANLPTPAAAVASSASTSASAMQSQYANMPYNYRSKCCHSEASHGSLSRTSQTYASCSPACTSPSPAPSTSMSMVFSAASSCSPIMTATSSARSGNHRGDDSDSVIVVPPGGGAMAQIEAENPSGTCLHCNTVRRTTGVHQTTQTTGPISPVPISLPVPMAMPVMSGLNEQMPSQSLESSMVSVQAKRLEGGGNMAVPPGSNQHQLYRSQMASNPRLQHIHHQTQQHQSLQVLPQPQNHHLSCKKRIGMYMRRTTSQFFGVEPSTEAADCALWQGRHRRLAIRCFGMFDTELEYHMQQAIGGGNEDAGQSNGTNGNYAPDRPDILPVQDAIGMDMTMSGDSRRQKCYTNRDFLAGEFVERKASVGYMFVAMVSYLVHMFNKRRPIQMHRVRCPWQWSRSFAPIHVQSHSNQQTDADGCLTDGLEAIIDDEVFFDSPCEITTSAVNDESSDIGRQAAKPRPCADQSGVGVSVYMAERQQNGWRTSALNSGGNATSDINLTGDQSSHQPGAAHIPLCSSVSSQMQPAMRSSHSTTSTCNRGNRITAQLLDGVLENSRRPPLRCIKYFSVNDLDDRTDHRPFFTYWINTVQVVVLILSIICYGIAPIGIGSEQKTGQVLVTSLSLQTVQHVEQRNLWIGPRNIDLVHMGAKFAACMRRDIKITEVVTKTRRHERETACCIRNDDSGCVQSSQAECSIRGLYPTKSISTWKKWSPSESGPGGRISGSVCGLDPKFCDAPASIAPYEWPDDITKWPICRKTNSFTQRYRYKDHTSEHMVCEVIGHPCCTGLYGECRITTREYCDFIKGYFHEEASLCSQISCLNNVCGMFPFISVETPDQLYRLLTSLCMHAGILHLAITLIFQHLFLADLERLIGTVRTAIVYIMSGFAGNLTSAILVPHRPEVGPSASLSGVVASLIALLVWMHWKYLHKPHIALFKLLLLCSVLVGIGTLPYQLNFLGLLAGVICGCLLTMSLVPFTTFSKYGRKKKINLIWTCVLFHVVVYTAMIVTFYIHPSEFHSISFVDMFSNSNGYDNFTNADHHGVDVVSSNTRYSQTQNSQYYYHHHSDDIIRKSVTFTEKALVSHILYPTAPRKTSAQQWQEVEYSRSFNHLSNYSDRIKKSIGNISKLKQVFTSPIRFSNKNNHSNLMTELTSVHSENKQKYLGYINNNTEFNVL</sequence>
<proteinExistence type="evidence at transcript level"/>
<name>RHDF1_DROME</name>
<dbReference type="EMBL" id="AE014134">
    <property type="protein sequence ID" value="AAS64674.1"/>
    <property type="molecule type" value="Genomic_DNA"/>
</dbReference>
<dbReference type="EMBL" id="BT125661">
    <property type="protein sequence ID" value="ADN43898.1"/>
    <property type="molecule type" value="mRNA"/>
</dbReference>
<dbReference type="RefSeq" id="NP_995679.1">
    <property type="nucleotide sequence ID" value="NM_205957.3"/>
</dbReference>
<dbReference type="SMR" id="Q76NQ1"/>
<dbReference type="BioGRID" id="77793">
    <property type="interactions" value="7"/>
</dbReference>
<dbReference type="FunCoup" id="Q76NQ1">
    <property type="interactions" value="24"/>
</dbReference>
<dbReference type="STRING" id="7227.FBpp0088796"/>
<dbReference type="GlyGen" id="Q76NQ1">
    <property type="glycosylation" value="1 site"/>
</dbReference>
<dbReference type="PaxDb" id="7227-FBpp0088796"/>
<dbReference type="EnsemblMetazoa" id="FBtr0089855">
    <property type="protein sequence ID" value="FBpp0088796"/>
    <property type="gene ID" value="FBgn0041723"/>
</dbReference>
<dbReference type="GeneID" id="2768944"/>
<dbReference type="KEGG" id="dme:Dmel_CG33304"/>
<dbReference type="UCSC" id="CG33304-RA">
    <property type="organism name" value="d. melanogaster"/>
</dbReference>
<dbReference type="AGR" id="FB:FBgn0041723"/>
<dbReference type="CTD" id="2768944"/>
<dbReference type="FlyBase" id="FBgn0041723">
    <property type="gene designation" value="rho-5"/>
</dbReference>
<dbReference type="VEuPathDB" id="VectorBase:FBgn0041723"/>
<dbReference type="eggNOG" id="KOG2290">
    <property type="taxonomic scope" value="Eukaryota"/>
</dbReference>
<dbReference type="eggNOG" id="KOG2291">
    <property type="taxonomic scope" value="Eukaryota"/>
</dbReference>
<dbReference type="GeneTree" id="ENSGT00940000168598"/>
<dbReference type="HOGENOM" id="CLU_004028_0_0_1"/>
<dbReference type="InParanoid" id="Q76NQ1"/>
<dbReference type="OMA" id="FFDSPCE"/>
<dbReference type="OrthoDB" id="2146116at2759"/>
<dbReference type="PhylomeDB" id="Q76NQ1"/>
<dbReference type="BioGRID-ORCS" id="2768944">
    <property type="hits" value="0 hits in 3 CRISPR screens"/>
</dbReference>
<dbReference type="GenomeRNAi" id="2768944"/>
<dbReference type="PRO" id="PR:Q76NQ1"/>
<dbReference type="Proteomes" id="UP000000803">
    <property type="component" value="Chromosome 2L"/>
</dbReference>
<dbReference type="Bgee" id="FBgn0041723">
    <property type="expression patterns" value="Expressed in T neuron T4a (Drosophila) in embryonic/larval optic lobe (Drosophila) and 57 other cell types or tissues"/>
</dbReference>
<dbReference type="GO" id="GO:0005783">
    <property type="term" value="C:endoplasmic reticulum"/>
    <property type="evidence" value="ECO:0000314"/>
    <property type="project" value="FlyBase"/>
</dbReference>
<dbReference type="GO" id="GO:0005789">
    <property type="term" value="C:endoplasmic reticulum membrane"/>
    <property type="evidence" value="ECO:0000314"/>
    <property type="project" value="UniProtKB"/>
</dbReference>
<dbReference type="GO" id="GO:0042059">
    <property type="term" value="P:negative regulation of epidermal growth factor receptor signaling pathway"/>
    <property type="evidence" value="ECO:0000315"/>
    <property type="project" value="UniProtKB"/>
</dbReference>
<dbReference type="GO" id="GO:0010841">
    <property type="term" value="P:positive regulation of circadian sleep/wake cycle, wakefulness"/>
    <property type="evidence" value="ECO:0000315"/>
    <property type="project" value="UniProtKB"/>
</dbReference>
<dbReference type="GO" id="GO:0015031">
    <property type="term" value="P:protein transport"/>
    <property type="evidence" value="ECO:0007669"/>
    <property type="project" value="UniProtKB-KW"/>
</dbReference>
<dbReference type="GO" id="GO:0042058">
    <property type="term" value="P:regulation of epidermal growth factor receptor signaling pathway"/>
    <property type="evidence" value="ECO:0000318"/>
    <property type="project" value="GO_Central"/>
</dbReference>
<dbReference type="GO" id="GO:0050708">
    <property type="term" value="P:regulation of protein secretion"/>
    <property type="evidence" value="ECO:0000318"/>
    <property type="project" value="GO_Central"/>
</dbReference>
<dbReference type="FunFam" id="1.20.1540.10:FF:000032">
    <property type="entry name" value="inactive rhomboid protein 1"/>
    <property type="match status" value="1"/>
</dbReference>
<dbReference type="Gene3D" id="1.20.1540.10">
    <property type="entry name" value="Rhomboid-like"/>
    <property type="match status" value="1"/>
</dbReference>
<dbReference type="InterPro" id="IPR051512">
    <property type="entry name" value="Inactive_Rhomboid"/>
</dbReference>
<dbReference type="InterPro" id="IPR022764">
    <property type="entry name" value="Peptidase_S54_rhomboid_dom"/>
</dbReference>
<dbReference type="InterPro" id="IPR035952">
    <property type="entry name" value="Rhomboid-like_sf"/>
</dbReference>
<dbReference type="PANTHER" id="PTHR45965">
    <property type="entry name" value="INACTIVE RHOMBOID PROTEIN"/>
    <property type="match status" value="1"/>
</dbReference>
<dbReference type="PANTHER" id="PTHR45965:SF3">
    <property type="entry name" value="INACTIVE RHOMBOID PROTEIN 1"/>
    <property type="match status" value="1"/>
</dbReference>
<dbReference type="Pfam" id="PF01694">
    <property type="entry name" value="Rhomboid"/>
    <property type="match status" value="1"/>
</dbReference>
<dbReference type="SUPFAM" id="SSF144091">
    <property type="entry name" value="Rhomboid-like"/>
    <property type="match status" value="1"/>
</dbReference>
<evidence type="ECO:0000255" key="1"/>
<evidence type="ECO:0000256" key="2">
    <source>
        <dbReference type="SAM" id="MobiDB-lite"/>
    </source>
</evidence>
<evidence type="ECO:0000269" key="3">
    <source>
    </source>
</evidence>
<evidence type="ECO:0000305" key="4"/>
<protein>
    <recommendedName>
        <fullName>Inactive rhomboid protein 1</fullName>
        <shortName>iRhom</shortName>
    </recommendedName>
    <alternativeName>
        <fullName>Rhomboid family protein rhomboid-5</fullName>
    </alternativeName>
</protein>
<organism>
    <name type="scientific">Drosophila melanogaster</name>
    <name type="common">Fruit fly</name>
    <dbReference type="NCBI Taxonomy" id="7227"/>
    <lineage>
        <taxon>Eukaryota</taxon>
        <taxon>Metazoa</taxon>
        <taxon>Ecdysozoa</taxon>
        <taxon>Arthropoda</taxon>
        <taxon>Hexapoda</taxon>
        <taxon>Insecta</taxon>
        <taxon>Pterygota</taxon>
        <taxon>Neoptera</taxon>
        <taxon>Endopterygota</taxon>
        <taxon>Diptera</taxon>
        <taxon>Brachycera</taxon>
        <taxon>Muscomorpha</taxon>
        <taxon>Ephydroidea</taxon>
        <taxon>Drosophilidae</taxon>
        <taxon>Drosophila</taxon>
        <taxon>Sophophora</taxon>
    </lineage>
</organism>
<keyword id="KW-0256">Endoplasmic reticulum</keyword>
<keyword id="KW-0472">Membrane</keyword>
<keyword id="KW-0653">Protein transport</keyword>
<keyword id="KW-1185">Reference proteome</keyword>
<keyword id="KW-0812">Transmembrane</keyword>
<keyword id="KW-1133">Transmembrane helix</keyword>
<keyword id="KW-0813">Transport</keyword>
<feature type="chain" id="PRO_0000408514" description="Inactive rhomboid protein 1">
    <location>
        <begin position="1"/>
        <end position="1429"/>
    </location>
</feature>
<feature type="topological domain" description="Cytoplasmic" evidence="1">
    <location>
        <begin position="1"/>
        <end position="843"/>
    </location>
</feature>
<feature type="transmembrane region" description="Helical" evidence="1">
    <location>
        <begin position="844"/>
        <end position="864"/>
    </location>
</feature>
<feature type="topological domain" description="Lumenal" evidence="1">
    <location>
        <begin position="865"/>
        <end position="1099"/>
    </location>
</feature>
<feature type="transmembrane region" description="Helical" evidence="1">
    <location>
        <begin position="1100"/>
        <end position="1120"/>
    </location>
</feature>
<feature type="topological domain" description="Cytoplasmic" evidence="1">
    <location>
        <begin position="1121"/>
        <end position="1131"/>
    </location>
</feature>
<feature type="transmembrane region" description="Helical" evidence="1">
    <location>
        <begin position="1132"/>
        <end position="1152"/>
    </location>
</feature>
<feature type="topological domain" description="Lumenal" evidence="1">
    <location>
        <begin position="1153"/>
        <end position="1156"/>
    </location>
</feature>
<feature type="transmembrane region" description="Helical" evidence="1">
    <location>
        <begin position="1157"/>
        <end position="1177"/>
    </location>
</feature>
<feature type="topological domain" description="Cytoplasmic" evidence="1">
    <location>
        <begin position="1178"/>
        <end position="1186"/>
    </location>
</feature>
<feature type="transmembrane region" description="Helical" evidence="1">
    <location>
        <begin position="1187"/>
        <end position="1207"/>
    </location>
</feature>
<feature type="topological domain" description="Lumenal" evidence="1">
    <location>
        <begin position="1208"/>
        <end position="1210"/>
    </location>
</feature>
<feature type="transmembrane region" description="Helical" evidence="1">
    <location>
        <begin position="1211"/>
        <end position="1231"/>
    </location>
</feature>
<feature type="topological domain" description="Cytoplasmic" evidence="1">
    <location>
        <begin position="1232"/>
        <end position="1245"/>
    </location>
</feature>
<feature type="transmembrane region" description="Helical" evidence="1">
    <location>
        <begin position="1246"/>
        <end position="1266"/>
    </location>
</feature>
<feature type="topological domain" description="Lumenal" evidence="1">
    <location>
        <begin position="1267"/>
        <end position="1429"/>
    </location>
</feature>
<feature type="region of interest" description="Disordered" evidence="2">
    <location>
        <begin position="1"/>
        <end position="36"/>
    </location>
</feature>
<feature type="region of interest" description="Disordered" evidence="2">
    <location>
        <begin position="560"/>
        <end position="579"/>
    </location>
</feature>
<feature type="region of interest" description="Disordered" evidence="2">
    <location>
        <begin position="740"/>
        <end position="766"/>
    </location>
</feature>
<feature type="compositionally biased region" description="Low complexity" evidence="2">
    <location>
        <begin position="22"/>
        <end position="33"/>
    </location>
</feature>
<feature type="compositionally biased region" description="Polar residues" evidence="2">
    <location>
        <begin position="564"/>
        <end position="573"/>
    </location>
</feature>
<feature type="compositionally biased region" description="Polar residues" evidence="2">
    <location>
        <begin position="740"/>
        <end position="763"/>
    </location>
</feature>
<gene>
    <name type="primary">rho-5</name>
    <name type="synonym">iRhom</name>
    <name type="ORF">CG33304</name>
</gene>
<accession>Q76NQ1</accession>
<accession>E1NZB2</accession>
<reference key="1">
    <citation type="journal article" date="2000" name="Science">
        <title>The genome sequence of Drosophila melanogaster.</title>
        <authorList>
            <person name="Adams M.D."/>
            <person name="Celniker S.E."/>
            <person name="Holt R.A."/>
            <person name="Evans C.A."/>
            <person name="Gocayne J.D."/>
            <person name="Amanatides P.G."/>
            <person name="Scherer S.E."/>
            <person name="Li P.W."/>
            <person name="Hoskins R.A."/>
            <person name="Galle R.F."/>
            <person name="George R.A."/>
            <person name="Lewis S.E."/>
            <person name="Richards S."/>
            <person name="Ashburner M."/>
            <person name="Henderson S.N."/>
            <person name="Sutton G.G."/>
            <person name="Wortman J.R."/>
            <person name="Yandell M.D."/>
            <person name="Zhang Q."/>
            <person name="Chen L.X."/>
            <person name="Brandon R.C."/>
            <person name="Rogers Y.-H.C."/>
            <person name="Blazej R.G."/>
            <person name="Champe M."/>
            <person name="Pfeiffer B.D."/>
            <person name="Wan K.H."/>
            <person name="Doyle C."/>
            <person name="Baxter E.G."/>
            <person name="Helt G."/>
            <person name="Nelson C.R."/>
            <person name="Miklos G.L.G."/>
            <person name="Abril J.F."/>
            <person name="Agbayani A."/>
            <person name="An H.-J."/>
            <person name="Andrews-Pfannkoch C."/>
            <person name="Baldwin D."/>
            <person name="Ballew R.M."/>
            <person name="Basu A."/>
            <person name="Baxendale J."/>
            <person name="Bayraktaroglu L."/>
            <person name="Beasley E.M."/>
            <person name="Beeson K.Y."/>
            <person name="Benos P.V."/>
            <person name="Berman B.P."/>
            <person name="Bhandari D."/>
            <person name="Bolshakov S."/>
            <person name="Borkova D."/>
            <person name="Botchan M.R."/>
            <person name="Bouck J."/>
            <person name="Brokstein P."/>
            <person name="Brottier P."/>
            <person name="Burtis K.C."/>
            <person name="Busam D.A."/>
            <person name="Butler H."/>
            <person name="Cadieu E."/>
            <person name="Center A."/>
            <person name="Chandra I."/>
            <person name="Cherry J.M."/>
            <person name="Cawley S."/>
            <person name="Dahlke C."/>
            <person name="Davenport L.B."/>
            <person name="Davies P."/>
            <person name="de Pablos B."/>
            <person name="Delcher A."/>
            <person name="Deng Z."/>
            <person name="Mays A.D."/>
            <person name="Dew I."/>
            <person name="Dietz S.M."/>
            <person name="Dodson K."/>
            <person name="Doup L.E."/>
            <person name="Downes M."/>
            <person name="Dugan-Rocha S."/>
            <person name="Dunkov B.C."/>
            <person name="Dunn P."/>
            <person name="Durbin K.J."/>
            <person name="Evangelista C.C."/>
            <person name="Ferraz C."/>
            <person name="Ferriera S."/>
            <person name="Fleischmann W."/>
            <person name="Fosler C."/>
            <person name="Gabrielian A.E."/>
            <person name="Garg N.S."/>
            <person name="Gelbart W.M."/>
            <person name="Glasser K."/>
            <person name="Glodek A."/>
            <person name="Gong F."/>
            <person name="Gorrell J.H."/>
            <person name="Gu Z."/>
            <person name="Guan P."/>
            <person name="Harris M."/>
            <person name="Harris N.L."/>
            <person name="Harvey D.A."/>
            <person name="Heiman T.J."/>
            <person name="Hernandez J.R."/>
            <person name="Houck J."/>
            <person name="Hostin D."/>
            <person name="Houston K.A."/>
            <person name="Howland T.J."/>
            <person name="Wei M.-H."/>
            <person name="Ibegwam C."/>
            <person name="Jalali M."/>
            <person name="Kalush F."/>
            <person name="Karpen G.H."/>
            <person name="Ke Z."/>
            <person name="Kennison J.A."/>
            <person name="Ketchum K.A."/>
            <person name="Kimmel B.E."/>
            <person name="Kodira C.D."/>
            <person name="Kraft C.L."/>
            <person name="Kravitz S."/>
            <person name="Kulp D."/>
            <person name="Lai Z."/>
            <person name="Lasko P."/>
            <person name="Lei Y."/>
            <person name="Levitsky A.A."/>
            <person name="Li J.H."/>
            <person name="Li Z."/>
            <person name="Liang Y."/>
            <person name="Lin X."/>
            <person name="Liu X."/>
            <person name="Mattei B."/>
            <person name="McIntosh T.C."/>
            <person name="McLeod M.P."/>
            <person name="McPherson D."/>
            <person name="Merkulov G."/>
            <person name="Milshina N.V."/>
            <person name="Mobarry C."/>
            <person name="Morris J."/>
            <person name="Moshrefi A."/>
            <person name="Mount S.M."/>
            <person name="Moy M."/>
            <person name="Murphy B."/>
            <person name="Murphy L."/>
            <person name="Muzny D.M."/>
            <person name="Nelson D.L."/>
            <person name="Nelson D.R."/>
            <person name="Nelson K.A."/>
            <person name="Nixon K."/>
            <person name="Nusskern D.R."/>
            <person name="Pacleb J.M."/>
            <person name="Palazzolo M."/>
            <person name="Pittman G.S."/>
            <person name="Pan S."/>
            <person name="Pollard J."/>
            <person name="Puri V."/>
            <person name="Reese M.G."/>
            <person name="Reinert K."/>
            <person name="Remington K."/>
            <person name="Saunders R.D.C."/>
            <person name="Scheeler F."/>
            <person name="Shen H."/>
            <person name="Shue B.C."/>
            <person name="Siden-Kiamos I."/>
            <person name="Simpson M."/>
            <person name="Skupski M.P."/>
            <person name="Smith T.J."/>
            <person name="Spier E."/>
            <person name="Spradling A.C."/>
            <person name="Stapleton M."/>
            <person name="Strong R."/>
            <person name="Sun E."/>
            <person name="Svirskas R."/>
            <person name="Tector C."/>
            <person name="Turner R."/>
            <person name="Venter E."/>
            <person name="Wang A.H."/>
            <person name="Wang X."/>
            <person name="Wang Z.-Y."/>
            <person name="Wassarman D.A."/>
            <person name="Weinstock G.M."/>
            <person name="Weissenbach J."/>
            <person name="Williams S.M."/>
            <person name="Woodage T."/>
            <person name="Worley K.C."/>
            <person name="Wu D."/>
            <person name="Yang S."/>
            <person name="Yao Q.A."/>
            <person name="Ye J."/>
            <person name="Yeh R.-F."/>
            <person name="Zaveri J.S."/>
            <person name="Zhan M."/>
            <person name="Zhang G."/>
            <person name="Zhao Q."/>
            <person name="Zheng L."/>
            <person name="Zheng X.H."/>
            <person name="Zhong F.N."/>
            <person name="Zhong W."/>
            <person name="Zhou X."/>
            <person name="Zhu S.C."/>
            <person name="Zhu X."/>
            <person name="Smith H.O."/>
            <person name="Gibbs R.A."/>
            <person name="Myers E.W."/>
            <person name="Rubin G.M."/>
            <person name="Venter J.C."/>
        </authorList>
    </citation>
    <scope>NUCLEOTIDE SEQUENCE [LARGE SCALE GENOMIC DNA]</scope>
    <source>
        <strain>Berkeley</strain>
    </source>
</reference>
<reference key="2">
    <citation type="journal article" date="2002" name="Genome Biol.">
        <title>Annotation of the Drosophila melanogaster euchromatic genome: a systematic review.</title>
        <authorList>
            <person name="Misra S."/>
            <person name="Crosby M.A."/>
            <person name="Mungall C.J."/>
            <person name="Matthews B.B."/>
            <person name="Campbell K.S."/>
            <person name="Hradecky P."/>
            <person name="Huang Y."/>
            <person name="Kaminker J.S."/>
            <person name="Millburn G.H."/>
            <person name="Prochnik S.E."/>
            <person name="Smith C.D."/>
            <person name="Tupy J.L."/>
            <person name="Whitfield E.J."/>
            <person name="Bayraktaroglu L."/>
            <person name="Berman B.P."/>
            <person name="Bettencourt B.R."/>
            <person name="Celniker S.E."/>
            <person name="de Grey A.D.N.J."/>
            <person name="Drysdale R.A."/>
            <person name="Harris N.L."/>
            <person name="Richter J."/>
            <person name="Russo S."/>
            <person name="Schroeder A.J."/>
            <person name="Shu S.Q."/>
            <person name="Stapleton M."/>
            <person name="Yamada C."/>
            <person name="Ashburner M."/>
            <person name="Gelbart W.M."/>
            <person name="Rubin G.M."/>
            <person name="Lewis S.E."/>
        </authorList>
    </citation>
    <scope>GENOME REANNOTATION</scope>
    <source>
        <strain>Berkeley</strain>
    </source>
</reference>
<reference key="3">
    <citation type="submission" date="2010-09" db="EMBL/GenBank/DDBJ databases">
        <authorList>
            <person name="Carlson J."/>
            <person name="Booth B."/>
            <person name="Frise E."/>
            <person name="Sandler J."/>
            <person name="Wan K."/>
            <person name="Yu C."/>
            <person name="Celniker S.E."/>
        </authorList>
    </citation>
    <scope>NUCLEOTIDE SEQUENCE [LARGE SCALE MRNA] OF 162-1429</scope>
</reference>
<reference key="4">
    <citation type="journal article" date="2011" name="Cell">
        <title>Rhomboid family pseudoproteases use the ER quality control machinery to regulate intercellular signaling.</title>
        <authorList>
            <person name="Zettl M."/>
            <person name="Adrain C."/>
            <person name="Strisovsky K."/>
            <person name="Lastun V."/>
            <person name="Freeman M."/>
        </authorList>
    </citation>
    <scope>FUNCTION</scope>
    <scope>DISRUPTION PHENOTYPE</scope>
    <scope>SUBCELLULAR LOCATION</scope>
    <scope>DEVELOPMENTAL STAGE</scope>
    <scope>TISSUE SPECIFICITY</scope>
</reference>